<protein>
    <recommendedName>
        <fullName evidence="2">Adenylosuccinate synthetase</fullName>
        <shortName evidence="2">AMPSase</shortName>
        <shortName evidence="2">AdSS</shortName>
        <ecNumber evidence="2">6.3.4.4</ecNumber>
    </recommendedName>
    <alternativeName>
        <fullName evidence="2">IMP--aspartate ligase</fullName>
    </alternativeName>
</protein>
<proteinExistence type="inferred from homology"/>
<sequence length="419" mass="46437">MVTLVLGAQFGDEGKGKITDLLSQTADLCCRSAGGHNAGHTIIHDNITYDFHILPSGLISPKCVNLIGSGTVVHVPSFFKELKALEEKGLKDANKRVFISDRAHVCFDLHSVVDGLEEASLGGRKVGTTGKGIGPCYSDKASRTGVRIGEVLDEGIVERKLRNLEAGYRRRFGDLTYDLEEEIKRFKEYRTLLKPFVVDQFTLLRKYKDASILIEGANALMLDIDHGTYPYVTSSCTGLGGTIQSLCLNPTEIKSIVGVVKAYSTRVGSGPFPSEQINEIGEKLQVTGREFGVTTGRKRRCGWLDLVMCRYSTLINHYTALNLTKLDILDDFDEIKVAVAYRLNGKEVESFPADAEELEKVEVVYETLPGWKVNTMGATKWEDLPPNAQKYIEYIEKDLGVPVRWIGTGPARSHMIERL</sequence>
<reference key="1">
    <citation type="journal article" date="2009" name="Genome Res.">
        <title>Comparative genomic analyses of the human fungal pathogens Coccidioides and their relatives.</title>
        <authorList>
            <person name="Sharpton T.J."/>
            <person name="Stajich J.E."/>
            <person name="Rounsley S.D."/>
            <person name="Gardner M.J."/>
            <person name="Wortman J.R."/>
            <person name="Jordar V.S."/>
            <person name="Maiti R."/>
            <person name="Kodira C.D."/>
            <person name="Neafsey D.E."/>
            <person name="Zeng Q."/>
            <person name="Hung C.-Y."/>
            <person name="McMahan C."/>
            <person name="Muszewska A."/>
            <person name="Grynberg M."/>
            <person name="Mandel M.A."/>
            <person name="Kellner E.M."/>
            <person name="Barker B.M."/>
            <person name="Galgiani J.N."/>
            <person name="Orbach M.J."/>
            <person name="Kirkland T.N."/>
            <person name="Cole G.T."/>
            <person name="Henn M.R."/>
            <person name="Birren B.W."/>
            <person name="Taylor J.W."/>
        </authorList>
    </citation>
    <scope>NUCLEOTIDE SEQUENCE [LARGE SCALE GENOMIC DNA]</scope>
    <source>
        <strain>C735</strain>
    </source>
</reference>
<dbReference type="EC" id="6.3.4.4" evidence="2"/>
<dbReference type="EMBL" id="ACFW01000030">
    <property type="protein sequence ID" value="EER26692.1"/>
    <property type="molecule type" value="Genomic_DNA"/>
</dbReference>
<dbReference type="RefSeq" id="XP_003068837.1">
    <property type="nucleotide sequence ID" value="XM_003068791.1"/>
</dbReference>
<dbReference type="SMR" id="C5PAD0"/>
<dbReference type="KEGG" id="cpw:9694320"/>
<dbReference type="VEuPathDB" id="FungiDB:CPC735_008660"/>
<dbReference type="HOGENOM" id="CLU_029848_3_2_1"/>
<dbReference type="OrthoDB" id="10265645at2759"/>
<dbReference type="UniPathway" id="UPA00075">
    <property type="reaction ID" value="UER00335"/>
</dbReference>
<dbReference type="Proteomes" id="UP000009084">
    <property type="component" value="Unassembled WGS sequence"/>
</dbReference>
<dbReference type="GO" id="GO:0005737">
    <property type="term" value="C:cytoplasm"/>
    <property type="evidence" value="ECO:0007669"/>
    <property type="project" value="UniProtKB-SubCell"/>
</dbReference>
<dbReference type="GO" id="GO:0004019">
    <property type="term" value="F:adenylosuccinate synthase activity"/>
    <property type="evidence" value="ECO:0007669"/>
    <property type="project" value="UniProtKB-UniRule"/>
</dbReference>
<dbReference type="GO" id="GO:0005525">
    <property type="term" value="F:GTP binding"/>
    <property type="evidence" value="ECO:0007669"/>
    <property type="project" value="UniProtKB-UniRule"/>
</dbReference>
<dbReference type="GO" id="GO:0000287">
    <property type="term" value="F:magnesium ion binding"/>
    <property type="evidence" value="ECO:0007669"/>
    <property type="project" value="UniProtKB-UniRule"/>
</dbReference>
<dbReference type="GO" id="GO:0044208">
    <property type="term" value="P:'de novo' AMP biosynthetic process"/>
    <property type="evidence" value="ECO:0007669"/>
    <property type="project" value="UniProtKB-UniRule"/>
</dbReference>
<dbReference type="GO" id="GO:0046040">
    <property type="term" value="P:IMP metabolic process"/>
    <property type="evidence" value="ECO:0007669"/>
    <property type="project" value="TreeGrafter"/>
</dbReference>
<dbReference type="CDD" id="cd03108">
    <property type="entry name" value="AdSS"/>
    <property type="match status" value="1"/>
</dbReference>
<dbReference type="FunFam" id="1.10.300.10:FF:000001">
    <property type="entry name" value="Adenylosuccinate synthetase"/>
    <property type="match status" value="1"/>
</dbReference>
<dbReference type="FunFam" id="3.90.170.10:FF:000001">
    <property type="entry name" value="Adenylosuccinate synthetase"/>
    <property type="match status" value="1"/>
</dbReference>
<dbReference type="Gene3D" id="3.40.440.10">
    <property type="entry name" value="Adenylosuccinate Synthetase, subunit A, domain 1"/>
    <property type="match status" value="1"/>
</dbReference>
<dbReference type="Gene3D" id="1.10.300.10">
    <property type="entry name" value="Adenylosuccinate Synthetase, subunit A, domain 2"/>
    <property type="match status" value="1"/>
</dbReference>
<dbReference type="Gene3D" id="3.90.170.10">
    <property type="entry name" value="Adenylosuccinate Synthetase, subunit A, domain 3"/>
    <property type="match status" value="1"/>
</dbReference>
<dbReference type="HAMAP" id="MF_00011">
    <property type="entry name" value="Adenylosucc_synth"/>
    <property type="match status" value="1"/>
</dbReference>
<dbReference type="InterPro" id="IPR018220">
    <property type="entry name" value="Adenylosuccin_syn_GTP-bd"/>
</dbReference>
<dbReference type="InterPro" id="IPR033128">
    <property type="entry name" value="Adenylosuccin_syn_Lys_AS"/>
</dbReference>
<dbReference type="InterPro" id="IPR042109">
    <property type="entry name" value="Adenylosuccinate_synth_dom1"/>
</dbReference>
<dbReference type="InterPro" id="IPR042110">
    <property type="entry name" value="Adenylosuccinate_synth_dom2"/>
</dbReference>
<dbReference type="InterPro" id="IPR042111">
    <property type="entry name" value="Adenylosuccinate_synth_dom3"/>
</dbReference>
<dbReference type="InterPro" id="IPR001114">
    <property type="entry name" value="Adenylosuccinate_synthetase"/>
</dbReference>
<dbReference type="InterPro" id="IPR027417">
    <property type="entry name" value="P-loop_NTPase"/>
</dbReference>
<dbReference type="NCBIfam" id="NF002223">
    <property type="entry name" value="PRK01117.1"/>
    <property type="match status" value="1"/>
</dbReference>
<dbReference type="NCBIfam" id="TIGR00184">
    <property type="entry name" value="purA"/>
    <property type="match status" value="1"/>
</dbReference>
<dbReference type="PANTHER" id="PTHR11846">
    <property type="entry name" value="ADENYLOSUCCINATE SYNTHETASE"/>
    <property type="match status" value="1"/>
</dbReference>
<dbReference type="PANTHER" id="PTHR11846:SF0">
    <property type="entry name" value="ADENYLOSUCCINATE SYNTHETASE"/>
    <property type="match status" value="1"/>
</dbReference>
<dbReference type="Pfam" id="PF00709">
    <property type="entry name" value="Adenylsucc_synt"/>
    <property type="match status" value="1"/>
</dbReference>
<dbReference type="SMART" id="SM00788">
    <property type="entry name" value="Adenylsucc_synt"/>
    <property type="match status" value="1"/>
</dbReference>
<dbReference type="SUPFAM" id="SSF52540">
    <property type="entry name" value="P-loop containing nucleoside triphosphate hydrolases"/>
    <property type="match status" value="1"/>
</dbReference>
<dbReference type="PROSITE" id="PS01266">
    <property type="entry name" value="ADENYLOSUCCIN_SYN_1"/>
    <property type="match status" value="1"/>
</dbReference>
<dbReference type="PROSITE" id="PS00513">
    <property type="entry name" value="ADENYLOSUCCIN_SYN_2"/>
    <property type="match status" value="1"/>
</dbReference>
<accession>C5PAD0</accession>
<name>PURA_COCP7</name>
<keyword id="KW-0963">Cytoplasm</keyword>
<keyword id="KW-0342">GTP-binding</keyword>
<keyword id="KW-0436">Ligase</keyword>
<keyword id="KW-0460">Magnesium</keyword>
<keyword id="KW-0479">Metal-binding</keyword>
<keyword id="KW-0547">Nucleotide-binding</keyword>
<keyword id="KW-0658">Purine biosynthesis</keyword>
<comment type="function">
    <text evidence="1">Plays an important role in the de novo pathway and in the salvage pathway of purine nucleotide biosynthesis. Catalyzes the first committed step in the biosynthesis of AMP from IMP (By similarity).</text>
</comment>
<comment type="catalytic activity">
    <reaction evidence="2">
        <text>IMP + L-aspartate + GTP = N(6)-(1,2-dicarboxyethyl)-AMP + GDP + phosphate + 2 H(+)</text>
        <dbReference type="Rhea" id="RHEA:15753"/>
        <dbReference type="ChEBI" id="CHEBI:15378"/>
        <dbReference type="ChEBI" id="CHEBI:29991"/>
        <dbReference type="ChEBI" id="CHEBI:37565"/>
        <dbReference type="ChEBI" id="CHEBI:43474"/>
        <dbReference type="ChEBI" id="CHEBI:57567"/>
        <dbReference type="ChEBI" id="CHEBI:58053"/>
        <dbReference type="ChEBI" id="CHEBI:58189"/>
        <dbReference type="EC" id="6.3.4.4"/>
    </reaction>
</comment>
<comment type="cofactor">
    <cofactor evidence="2">
        <name>Mg(2+)</name>
        <dbReference type="ChEBI" id="CHEBI:18420"/>
    </cofactor>
    <text evidence="2">Binds 1 Mg(2+) ion per subunit.</text>
</comment>
<comment type="pathway">
    <text evidence="2">Purine metabolism; AMP biosynthesis via de novo pathway; AMP from IMP: step 1/2.</text>
</comment>
<comment type="subunit">
    <text evidence="2">Homodimer.</text>
</comment>
<comment type="subcellular location">
    <subcellularLocation>
        <location evidence="2">Cytoplasm</location>
    </subcellularLocation>
</comment>
<comment type="similarity">
    <text evidence="2">Belongs to the adenylosuccinate synthetase family.</text>
</comment>
<feature type="chain" id="PRO_0000399332" description="Adenylosuccinate synthetase">
    <location>
        <begin position="1"/>
        <end position="419"/>
    </location>
</feature>
<feature type="active site" description="Proton acceptor" evidence="2">
    <location>
        <position position="12"/>
    </location>
</feature>
<feature type="active site" description="Proton donor" evidence="2">
    <location>
        <position position="40"/>
    </location>
</feature>
<feature type="binding site" evidence="2">
    <location>
        <begin position="11"/>
        <end position="17"/>
    </location>
    <ligand>
        <name>GTP</name>
        <dbReference type="ChEBI" id="CHEBI:37565"/>
    </ligand>
</feature>
<feature type="binding site" description="in other chain" evidence="2">
    <location>
        <begin position="12"/>
        <end position="15"/>
    </location>
    <ligand>
        <name>IMP</name>
        <dbReference type="ChEBI" id="CHEBI:58053"/>
        <note>ligand shared between dimeric partners</note>
    </ligand>
</feature>
<feature type="binding site" evidence="2">
    <location>
        <position position="12"/>
    </location>
    <ligand>
        <name>Mg(2+)</name>
        <dbReference type="ChEBI" id="CHEBI:18420"/>
    </ligand>
</feature>
<feature type="binding site" description="in other chain" evidence="2">
    <location>
        <begin position="37"/>
        <end position="40"/>
    </location>
    <ligand>
        <name>IMP</name>
        <dbReference type="ChEBI" id="CHEBI:58053"/>
        <note>ligand shared between dimeric partners</note>
    </ligand>
</feature>
<feature type="binding site" evidence="2">
    <location>
        <begin position="39"/>
        <end position="41"/>
    </location>
    <ligand>
        <name>GTP</name>
        <dbReference type="ChEBI" id="CHEBI:37565"/>
    </ligand>
</feature>
<feature type="binding site" evidence="2">
    <location>
        <position position="39"/>
    </location>
    <ligand>
        <name>Mg(2+)</name>
        <dbReference type="ChEBI" id="CHEBI:18420"/>
    </ligand>
</feature>
<feature type="binding site" description="in other chain" evidence="2">
    <location>
        <position position="129"/>
    </location>
    <ligand>
        <name>IMP</name>
        <dbReference type="ChEBI" id="CHEBI:58053"/>
        <note>ligand shared between dimeric partners</note>
    </ligand>
</feature>
<feature type="binding site" evidence="2">
    <location>
        <position position="143"/>
    </location>
    <ligand>
        <name>IMP</name>
        <dbReference type="ChEBI" id="CHEBI:58053"/>
        <note>ligand shared between dimeric partners</note>
    </ligand>
</feature>
<feature type="binding site" description="in other chain" evidence="2">
    <location>
        <position position="218"/>
    </location>
    <ligand>
        <name>IMP</name>
        <dbReference type="ChEBI" id="CHEBI:58053"/>
        <note>ligand shared between dimeric partners</note>
    </ligand>
</feature>
<feature type="binding site" description="in other chain" evidence="2">
    <location>
        <position position="233"/>
    </location>
    <ligand>
        <name>IMP</name>
        <dbReference type="ChEBI" id="CHEBI:58053"/>
        <note>ligand shared between dimeric partners</note>
    </ligand>
</feature>
<feature type="binding site" evidence="2">
    <location>
        <begin position="293"/>
        <end position="299"/>
    </location>
    <ligand>
        <name>substrate</name>
    </ligand>
</feature>
<feature type="binding site" description="in other chain" evidence="2">
    <location>
        <position position="297"/>
    </location>
    <ligand>
        <name>IMP</name>
        <dbReference type="ChEBI" id="CHEBI:58053"/>
        <note>ligand shared between dimeric partners</note>
    </ligand>
</feature>
<feature type="binding site" evidence="2">
    <location>
        <position position="299"/>
    </location>
    <ligand>
        <name>GTP</name>
        <dbReference type="ChEBI" id="CHEBI:37565"/>
    </ligand>
</feature>
<feature type="binding site" evidence="2">
    <location>
        <begin position="325"/>
        <end position="327"/>
    </location>
    <ligand>
        <name>GTP</name>
        <dbReference type="ChEBI" id="CHEBI:37565"/>
    </ligand>
</feature>
<feature type="binding site" evidence="2">
    <location>
        <begin position="407"/>
        <end position="409"/>
    </location>
    <ligand>
        <name>GTP</name>
        <dbReference type="ChEBI" id="CHEBI:37565"/>
    </ligand>
</feature>
<evidence type="ECO:0000250" key="1"/>
<evidence type="ECO:0000255" key="2">
    <source>
        <dbReference type="HAMAP-Rule" id="MF_03125"/>
    </source>
</evidence>
<gene>
    <name type="ORF">CPC735_008660</name>
</gene>
<organism>
    <name type="scientific">Coccidioides posadasii (strain C735)</name>
    <name type="common">Valley fever fungus</name>
    <dbReference type="NCBI Taxonomy" id="222929"/>
    <lineage>
        <taxon>Eukaryota</taxon>
        <taxon>Fungi</taxon>
        <taxon>Dikarya</taxon>
        <taxon>Ascomycota</taxon>
        <taxon>Pezizomycotina</taxon>
        <taxon>Eurotiomycetes</taxon>
        <taxon>Eurotiomycetidae</taxon>
        <taxon>Onygenales</taxon>
        <taxon>Onygenaceae</taxon>
        <taxon>Coccidioides</taxon>
    </lineage>
</organism>